<reference key="1">
    <citation type="journal article" date="2004" name="Nature">
        <title>Genome evolution in yeasts.</title>
        <authorList>
            <person name="Dujon B."/>
            <person name="Sherman D."/>
            <person name="Fischer G."/>
            <person name="Durrens P."/>
            <person name="Casaregola S."/>
            <person name="Lafontaine I."/>
            <person name="de Montigny J."/>
            <person name="Marck C."/>
            <person name="Neuveglise C."/>
            <person name="Talla E."/>
            <person name="Goffard N."/>
            <person name="Frangeul L."/>
            <person name="Aigle M."/>
            <person name="Anthouard V."/>
            <person name="Babour A."/>
            <person name="Barbe V."/>
            <person name="Barnay S."/>
            <person name="Blanchin S."/>
            <person name="Beckerich J.-M."/>
            <person name="Beyne E."/>
            <person name="Bleykasten C."/>
            <person name="Boisrame A."/>
            <person name="Boyer J."/>
            <person name="Cattolico L."/>
            <person name="Confanioleri F."/>
            <person name="de Daruvar A."/>
            <person name="Despons L."/>
            <person name="Fabre E."/>
            <person name="Fairhead C."/>
            <person name="Ferry-Dumazet H."/>
            <person name="Groppi A."/>
            <person name="Hantraye F."/>
            <person name="Hennequin C."/>
            <person name="Jauniaux N."/>
            <person name="Joyet P."/>
            <person name="Kachouri R."/>
            <person name="Kerrest A."/>
            <person name="Koszul R."/>
            <person name="Lemaire M."/>
            <person name="Lesur I."/>
            <person name="Ma L."/>
            <person name="Muller H."/>
            <person name="Nicaud J.-M."/>
            <person name="Nikolski M."/>
            <person name="Oztas S."/>
            <person name="Ozier-Kalogeropoulos O."/>
            <person name="Pellenz S."/>
            <person name="Potier S."/>
            <person name="Richard G.-F."/>
            <person name="Straub M.-L."/>
            <person name="Suleau A."/>
            <person name="Swennen D."/>
            <person name="Tekaia F."/>
            <person name="Wesolowski-Louvel M."/>
            <person name="Westhof E."/>
            <person name="Wirth B."/>
            <person name="Zeniou-Meyer M."/>
            <person name="Zivanovic Y."/>
            <person name="Bolotin-Fukuhara M."/>
            <person name="Thierry A."/>
            <person name="Bouchier C."/>
            <person name="Caudron B."/>
            <person name="Scarpelli C."/>
            <person name="Gaillardin C."/>
            <person name="Weissenbach J."/>
            <person name="Wincker P."/>
            <person name="Souciet J.-L."/>
        </authorList>
    </citation>
    <scope>NUCLEOTIDE SEQUENCE [LARGE SCALE GENOMIC DNA]</scope>
    <source>
        <strain>ATCC 36239 / CBS 767 / BCRC 21394 / JCM 1990 / NBRC 0083 / IGC 2968</strain>
    </source>
</reference>
<keyword id="KW-0963">Cytoplasm</keyword>
<keyword id="KW-0413">Isomerase</keyword>
<keyword id="KW-1185">Reference proteome</keyword>
<proteinExistence type="inferred from homology"/>
<name>RPIA_DEBHA</name>
<accession>Q6BYI4</accession>
<dbReference type="EC" id="5.3.1.6"/>
<dbReference type="EMBL" id="CR382133">
    <property type="protein sequence ID" value="CAG84694.2"/>
    <property type="molecule type" value="Genomic_DNA"/>
</dbReference>
<dbReference type="RefSeq" id="XP_456735.2">
    <property type="nucleotide sequence ID" value="XM_456735.2"/>
</dbReference>
<dbReference type="SMR" id="Q6BYI4"/>
<dbReference type="FunCoup" id="Q6BYI4">
    <property type="interactions" value="972"/>
</dbReference>
<dbReference type="STRING" id="284592.Q6BYI4"/>
<dbReference type="GeneID" id="2899730"/>
<dbReference type="KEGG" id="dha:DEHA2A09328g"/>
<dbReference type="VEuPathDB" id="FungiDB:DEHA2A09328g"/>
<dbReference type="eggNOG" id="KOG3075">
    <property type="taxonomic scope" value="Eukaryota"/>
</dbReference>
<dbReference type="HOGENOM" id="CLU_056590_0_0_1"/>
<dbReference type="InParanoid" id="Q6BYI4"/>
<dbReference type="OMA" id="ACHVQEK"/>
<dbReference type="OrthoDB" id="1555531at2759"/>
<dbReference type="UniPathway" id="UPA00115">
    <property type="reaction ID" value="UER00412"/>
</dbReference>
<dbReference type="Proteomes" id="UP000000599">
    <property type="component" value="Chromosome A"/>
</dbReference>
<dbReference type="GO" id="GO:0005737">
    <property type="term" value="C:cytoplasm"/>
    <property type="evidence" value="ECO:0007669"/>
    <property type="project" value="UniProtKB-SubCell"/>
</dbReference>
<dbReference type="GO" id="GO:0004751">
    <property type="term" value="F:ribose-5-phosphate isomerase activity"/>
    <property type="evidence" value="ECO:0007669"/>
    <property type="project" value="UniProtKB-EC"/>
</dbReference>
<dbReference type="GO" id="GO:0006014">
    <property type="term" value="P:D-ribose metabolic process"/>
    <property type="evidence" value="ECO:0007669"/>
    <property type="project" value="TreeGrafter"/>
</dbReference>
<dbReference type="GO" id="GO:0009052">
    <property type="term" value="P:pentose-phosphate shunt, non-oxidative branch"/>
    <property type="evidence" value="ECO:0007669"/>
    <property type="project" value="InterPro"/>
</dbReference>
<dbReference type="GO" id="GO:0008615">
    <property type="term" value="P:pyridoxine biosynthetic process"/>
    <property type="evidence" value="ECO:0007669"/>
    <property type="project" value="EnsemblFungi"/>
</dbReference>
<dbReference type="CDD" id="cd01398">
    <property type="entry name" value="RPI_A"/>
    <property type="match status" value="1"/>
</dbReference>
<dbReference type="FunFam" id="3.40.50.1360:FF:000014">
    <property type="entry name" value="Ribose 5-phosphate isomerase"/>
    <property type="match status" value="1"/>
</dbReference>
<dbReference type="FunFam" id="3.30.70.260:FF:000053">
    <property type="entry name" value="Ribose-5-phosphate isomerase, putative"/>
    <property type="match status" value="1"/>
</dbReference>
<dbReference type="Gene3D" id="3.30.70.260">
    <property type="match status" value="1"/>
</dbReference>
<dbReference type="Gene3D" id="3.40.50.1360">
    <property type="match status" value="1"/>
</dbReference>
<dbReference type="InterPro" id="IPR037171">
    <property type="entry name" value="NagB/RpiA_transferase-like"/>
</dbReference>
<dbReference type="InterPro" id="IPR004788">
    <property type="entry name" value="Ribose5P_isomerase_type_A"/>
</dbReference>
<dbReference type="NCBIfam" id="NF001924">
    <property type="entry name" value="PRK00702.1"/>
    <property type="match status" value="1"/>
</dbReference>
<dbReference type="NCBIfam" id="TIGR00021">
    <property type="entry name" value="rpiA"/>
    <property type="match status" value="1"/>
</dbReference>
<dbReference type="PANTHER" id="PTHR11934">
    <property type="entry name" value="RIBOSE-5-PHOSPHATE ISOMERASE"/>
    <property type="match status" value="1"/>
</dbReference>
<dbReference type="PANTHER" id="PTHR11934:SF0">
    <property type="entry name" value="RIBOSE-5-PHOSPHATE ISOMERASE"/>
    <property type="match status" value="1"/>
</dbReference>
<dbReference type="Pfam" id="PF06026">
    <property type="entry name" value="Rib_5-P_isom_A"/>
    <property type="match status" value="1"/>
</dbReference>
<dbReference type="SUPFAM" id="SSF75445">
    <property type="entry name" value="D-ribose-5-phosphate isomerase (RpiA), lid domain"/>
    <property type="match status" value="1"/>
</dbReference>
<dbReference type="SUPFAM" id="SSF100950">
    <property type="entry name" value="NagB/RpiA/CoA transferase-like"/>
    <property type="match status" value="1"/>
</dbReference>
<feature type="chain" id="PRO_0000339887" description="Ribose-5-phosphate isomerase">
    <location>
        <begin position="1"/>
        <end position="252"/>
    </location>
</feature>
<sequence length="252" mass="27289">MLKRIISARYIRNMSSGASLVEKAKKSAAYQAVDENFPEGAKVVGVGSGSTVIYVAERISQLKNKESFVCVPTGFQSKQLIIDAGLRLGTIEQYPEVDIAFDGADEVDTELNLIKGGGACLFQEKLVAAAASKFVIVADFRKRSPSKLGIQWRKGVPIEIVPCAYAKVSKDLEAMGAKKVELRQGGSAKAGPVVTDNNNFLIDADFGEIEDPAKLHTDIKQLVGVVETGLFVQMAYKTYFGEESGEVKCWSK</sequence>
<gene>
    <name type="primary">RKI1</name>
    <name type="ordered locus">DEHA2A09328g</name>
</gene>
<organism>
    <name type="scientific">Debaryomyces hansenii (strain ATCC 36239 / CBS 767 / BCRC 21394 / JCM 1990 / NBRC 0083 / IGC 2968)</name>
    <name type="common">Yeast</name>
    <name type="synonym">Torulaspora hansenii</name>
    <dbReference type="NCBI Taxonomy" id="284592"/>
    <lineage>
        <taxon>Eukaryota</taxon>
        <taxon>Fungi</taxon>
        <taxon>Dikarya</taxon>
        <taxon>Ascomycota</taxon>
        <taxon>Saccharomycotina</taxon>
        <taxon>Pichiomycetes</taxon>
        <taxon>Debaryomycetaceae</taxon>
        <taxon>Debaryomyces</taxon>
    </lineage>
</organism>
<comment type="catalytic activity">
    <reaction>
        <text>aldehydo-D-ribose 5-phosphate = D-ribulose 5-phosphate</text>
        <dbReference type="Rhea" id="RHEA:14657"/>
        <dbReference type="ChEBI" id="CHEBI:58121"/>
        <dbReference type="ChEBI" id="CHEBI:58273"/>
        <dbReference type="EC" id="5.3.1.6"/>
    </reaction>
</comment>
<comment type="pathway">
    <text>Carbohydrate degradation; pentose phosphate pathway; D-ribose 5-phosphate from D-ribulose 5-phosphate (non-oxidative stage): step 1/1.</text>
</comment>
<comment type="subcellular location">
    <subcellularLocation>
        <location evidence="1">Cytoplasm</location>
    </subcellularLocation>
</comment>
<comment type="similarity">
    <text evidence="1">Belongs to the ribose 5-phosphate isomerase family.</text>
</comment>
<protein>
    <recommendedName>
        <fullName>Ribose-5-phosphate isomerase</fullName>
        <ecNumber>5.3.1.6</ecNumber>
    </recommendedName>
    <alternativeName>
        <fullName>D-ribose-5-phosphate ketol-isomerase</fullName>
    </alternativeName>
    <alternativeName>
        <fullName>Phosphoriboisomerase</fullName>
    </alternativeName>
</protein>
<evidence type="ECO:0000305" key="1"/>